<sequence length="407" mass="43767">MSSSPMLGGIADRWRELHGQDSWNGLLDPLDLDLRSSILSYGELVQATYDSFNRERRSPHAGACVYGHGDLLAAAGASAAGSYAVTKFVYATSGLPVPEAFLLLPLPSLLPPAWSRESNWMGYVAVATDEGVAALGRRDIVVAWRGTVESLEWVNDFDFTPVPAAPVLGAAAAANPRAIVHRGFLSVYTSSNKDSKYNKASARDQVLEEVRRLMELYKDEVTSITVVGHSLGASLATLNAVDIVANGANCPPASSSSSQPPCPVTAIVFASPRVGDGFFKAAFASFPDLRALHVKNAGDVVPMYPPLGYVDVAVKLRISTSRSPYLRSPGTIETLHNLECYLHGVAGEQGSAGGFKLEVDRDVALANKGVDALKDKYPVPPRWWVSKNRCMVKDADGHWALHDFEQI</sequence>
<accession>A2Y7R2</accession>
<keyword id="KW-0963">Cytoplasm</keyword>
<keyword id="KW-0378">Hydrolase</keyword>
<keyword id="KW-0442">Lipid degradation</keyword>
<keyword id="KW-0443">Lipid metabolism</keyword>
<keyword id="KW-1185">Reference proteome</keyword>
<dbReference type="EC" id="3.1.1.-"/>
<dbReference type="EMBL" id="CM000130">
    <property type="protein sequence ID" value="EAY99122.1"/>
    <property type="molecule type" value="Genomic_DNA"/>
</dbReference>
<dbReference type="SMR" id="A2Y7R2"/>
<dbReference type="ESTHER" id="orysj-PLA7">
    <property type="family name" value="Plant_phospholipase"/>
</dbReference>
<dbReference type="EnsemblPlants" id="BGIOSGA017516-TA">
    <property type="protein sequence ID" value="BGIOSGA017516-PA"/>
    <property type="gene ID" value="BGIOSGA017516"/>
</dbReference>
<dbReference type="EnsemblPlants" id="OsGoSa_05g0027550.01">
    <property type="protein sequence ID" value="OsGoSa_05g0027550.01"/>
    <property type="gene ID" value="OsGoSa_05g0027550"/>
</dbReference>
<dbReference type="EnsemblPlants" id="OsIR64_05g0027290.01">
    <property type="protein sequence ID" value="OsIR64_05g0027290.01"/>
    <property type="gene ID" value="OsIR64_05g0027290"/>
</dbReference>
<dbReference type="EnsemblPlants" id="OsKYG_05g0027320.01">
    <property type="protein sequence ID" value="OsKYG_05g0027320.01"/>
    <property type="gene ID" value="OsKYG_05g0027320"/>
</dbReference>
<dbReference type="EnsemblPlants" id="OsLaMu_05g0027570.01">
    <property type="protein sequence ID" value="OsLaMu_05g0027570.01"/>
    <property type="gene ID" value="OsLaMu_05g0027570"/>
</dbReference>
<dbReference type="EnsemblPlants" id="OsLima_05g0027440.01">
    <property type="protein sequence ID" value="OsLima_05g0027440.01"/>
    <property type="gene ID" value="OsLima_05g0027440"/>
</dbReference>
<dbReference type="EnsemblPlants" id="OsLiXu_05g0027560.01">
    <property type="protein sequence ID" value="OsLiXu_05g0027560.01"/>
    <property type="gene ID" value="OsLiXu_05g0027560"/>
</dbReference>
<dbReference type="EnsemblPlants" id="OsMH63_05G027470_01">
    <property type="protein sequence ID" value="OsMH63_05G027470_01"/>
    <property type="gene ID" value="OsMH63_05G027470"/>
</dbReference>
<dbReference type="EnsemblPlants" id="OsPr106_05g0027600.01">
    <property type="protein sequence ID" value="OsPr106_05g0027600.01"/>
    <property type="gene ID" value="OsPr106_05g0027600"/>
</dbReference>
<dbReference type="EnsemblPlants" id="OsZS97_05G027710_01">
    <property type="protein sequence ID" value="OsZS97_05G027710_01"/>
    <property type="gene ID" value="OsZS97_05G027710"/>
</dbReference>
<dbReference type="Gramene" id="BGIOSGA017516-TA">
    <property type="protein sequence ID" value="BGIOSGA017516-PA"/>
    <property type="gene ID" value="BGIOSGA017516"/>
</dbReference>
<dbReference type="Gramene" id="OsGoSa_05g0027550.01">
    <property type="protein sequence ID" value="OsGoSa_05g0027550.01"/>
    <property type="gene ID" value="OsGoSa_05g0027550"/>
</dbReference>
<dbReference type="Gramene" id="OsIR64_05g0027290.01">
    <property type="protein sequence ID" value="OsIR64_05g0027290.01"/>
    <property type="gene ID" value="OsIR64_05g0027290"/>
</dbReference>
<dbReference type="Gramene" id="OsKYG_05g0027320.01">
    <property type="protein sequence ID" value="OsKYG_05g0027320.01"/>
    <property type="gene ID" value="OsKYG_05g0027320"/>
</dbReference>
<dbReference type="Gramene" id="OsLaMu_05g0027570.01">
    <property type="protein sequence ID" value="OsLaMu_05g0027570.01"/>
    <property type="gene ID" value="OsLaMu_05g0027570"/>
</dbReference>
<dbReference type="Gramene" id="OsLima_05g0027440.01">
    <property type="protein sequence ID" value="OsLima_05g0027440.01"/>
    <property type="gene ID" value="OsLima_05g0027440"/>
</dbReference>
<dbReference type="Gramene" id="OsLiXu_05g0027560.01">
    <property type="protein sequence ID" value="OsLiXu_05g0027560.01"/>
    <property type="gene ID" value="OsLiXu_05g0027560"/>
</dbReference>
<dbReference type="Gramene" id="OsMH63_05G027470_01">
    <property type="protein sequence ID" value="OsMH63_05G027470_01"/>
    <property type="gene ID" value="OsMH63_05G027470"/>
</dbReference>
<dbReference type="Gramene" id="OsPr106_05g0027600.01">
    <property type="protein sequence ID" value="OsPr106_05g0027600.01"/>
    <property type="gene ID" value="OsPr106_05g0027600"/>
</dbReference>
<dbReference type="Gramene" id="OsZS97_05G027710_01">
    <property type="protein sequence ID" value="OsZS97_05G027710_01"/>
    <property type="gene ID" value="OsZS97_05G027710"/>
</dbReference>
<dbReference type="HOGENOM" id="CLU_018841_0_0_1"/>
<dbReference type="OMA" id="DASRWHN"/>
<dbReference type="OrthoDB" id="438440at2759"/>
<dbReference type="Proteomes" id="UP000007015">
    <property type="component" value="Chromosome 5"/>
</dbReference>
<dbReference type="GO" id="GO:0005737">
    <property type="term" value="C:cytoplasm"/>
    <property type="evidence" value="ECO:0000250"/>
    <property type="project" value="UniProtKB"/>
</dbReference>
<dbReference type="GO" id="GO:0008970">
    <property type="term" value="F:phospholipase A1 activity"/>
    <property type="evidence" value="ECO:0000250"/>
    <property type="project" value="UniProtKB"/>
</dbReference>
<dbReference type="GO" id="GO:0016042">
    <property type="term" value="P:lipid catabolic process"/>
    <property type="evidence" value="ECO:0007669"/>
    <property type="project" value="UniProtKB-KW"/>
</dbReference>
<dbReference type="CDD" id="cd00519">
    <property type="entry name" value="Lipase_3"/>
    <property type="match status" value="1"/>
</dbReference>
<dbReference type="FunFam" id="3.40.50.1820:FF:000065">
    <property type="entry name" value="Phospholipase A1-II 3"/>
    <property type="match status" value="1"/>
</dbReference>
<dbReference type="Gene3D" id="3.40.50.1820">
    <property type="entry name" value="alpha/beta hydrolase"/>
    <property type="match status" value="1"/>
</dbReference>
<dbReference type="InterPro" id="IPR029058">
    <property type="entry name" value="AB_hydrolase_fold"/>
</dbReference>
<dbReference type="InterPro" id="IPR002921">
    <property type="entry name" value="Fungal_lipase-type"/>
</dbReference>
<dbReference type="InterPro" id="IPR033556">
    <property type="entry name" value="PLA"/>
</dbReference>
<dbReference type="PANTHER" id="PTHR31828">
    <property type="entry name" value="PHOSPHOLIPASE A1-IIGAMMA"/>
    <property type="match status" value="1"/>
</dbReference>
<dbReference type="PANTHER" id="PTHR31828:SF1">
    <property type="entry name" value="PHOSPHOLIPASE A1-IIGAMMA"/>
    <property type="match status" value="1"/>
</dbReference>
<dbReference type="Pfam" id="PF01764">
    <property type="entry name" value="Lipase_3"/>
    <property type="match status" value="1"/>
</dbReference>
<dbReference type="SUPFAM" id="SSF53474">
    <property type="entry name" value="alpha/beta-Hydrolases"/>
    <property type="match status" value="1"/>
</dbReference>
<dbReference type="PROSITE" id="PS00120">
    <property type="entry name" value="LIPASE_SER"/>
    <property type="match status" value="1"/>
</dbReference>
<evidence type="ECO:0000250" key="1"/>
<evidence type="ECO:0000255" key="2">
    <source>
        <dbReference type="PROSITE-ProRule" id="PRU10037"/>
    </source>
</evidence>
<evidence type="ECO:0000305" key="3"/>
<proteinExistence type="inferred from homology"/>
<feature type="chain" id="PRO_0000409373" description="Phospholipase A1-II 7">
    <location>
        <begin position="1"/>
        <end position="407"/>
    </location>
</feature>
<feature type="active site" description="Acyl-ester intermediate" evidence="1">
    <location>
        <position position="230"/>
    </location>
</feature>
<feature type="active site" description="Charge relay system" evidence="2">
    <location>
        <position position="230"/>
    </location>
</feature>
<feature type="active site" description="Charge relay system" evidence="2">
    <location>
        <position position="299"/>
    </location>
</feature>
<feature type="active site" description="Charge relay system" evidence="2">
    <location>
        <position position="336"/>
    </location>
</feature>
<organism>
    <name type="scientific">Oryza sativa subsp. indica</name>
    <name type="common">Rice</name>
    <dbReference type="NCBI Taxonomy" id="39946"/>
    <lineage>
        <taxon>Eukaryota</taxon>
        <taxon>Viridiplantae</taxon>
        <taxon>Streptophyta</taxon>
        <taxon>Embryophyta</taxon>
        <taxon>Tracheophyta</taxon>
        <taxon>Spermatophyta</taxon>
        <taxon>Magnoliopsida</taxon>
        <taxon>Liliopsida</taxon>
        <taxon>Poales</taxon>
        <taxon>Poaceae</taxon>
        <taxon>BOP clade</taxon>
        <taxon>Oryzoideae</taxon>
        <taxon>Oryzeae</taxon>
        <taxon>Oryzinae</taxon>
        <taxon>Oryza</taxon>
        <taxon>Oryza sativa</taxon>
    </lineage>
</organism>
<reference key="1">
    <citation type="journal article" date="2005" name="PLoS Biol.">
        <title>The genomes of Oryza sativa: a history of duplications.</title>
        <authorList>
            <person name="Yu J."/>
            <person name="Wang J."/>
            <person name="Lin W."/>
            <person name="Li S."/>
            <person name="Li H."/>
            <person name="Zhou J."/>
            <person name="Ni P."/>
            <person name="Dong W."/>
            <person name="Hu S."/>
            <person name="Zeng C."/>
            <person name="Zhang J."/>
            <person name="Zhang Y."/>
            <person name="Li R."/>
            <person name="Xu Z."/>
            <person name="Li S."/>
            <person name="Li X."/>
            <person name="Zheng H."/>
            <person name="Cong L."/>
            <person name="Lin L."/>
            <person name="Yin J."/>
            <person name="Geng J."/>
            <person name="Li G."/>
            <person name="Shi J."/>
            <person name="Liu J."/>
            <person name="Lv H."/>
            <person name="Li J."/>
            <person name="Wang J."/>
            <person name="Deng Y."/>
            <person name="Ran L."/>
            <person name="Shi X."/>
            <person name="Wang X."/>
            <person name="Wu Q."/>
            <person name="Li C."/>
            <person name="Ren X."/>
            <person name="Wang J."/>
            <person name="Wang X."/>
            <person name="Li D."/>
            <person name="Liu D."/>
            <person name="Zhang X."/>
            <person name="Ji Z."/>
            <person name="Zhao W."/>
            <person name="Sun Y."/>
            <person name="Zhang Z."/>
            <person name="Bao J."/>
            <person name="Han Y."/>
            <person name="Dong L."/>
            <person name="Ji J."/>
            <person name="Chen P."/>
            <person name="Wu S."/>
            <person name="Liu J."/>
            <person name="Xiao Y."/>
            <person name="Bu D."/>
            <person name="Tan J."/>
            <person name="Yang L."/>
            <person name="Ye C."/>
            <person name="Zhang J."/>
            <person name="Xu J."/>
            <person name="Zhou Y."/>
            <person name="Yu Y."/>
            <person name="Zhang B."/>
            <person name="Zhuang S."/>
            <person name="Wei H."/>
            <person name="Liu B."/>
            <person name="Lei M."/>
            <person name="Yu H."/>
            <person name="Li Y."/>
            <person name="Xu H."/>
            <person name="Wei S."/>
            <person name="He X."/>
            <person name="Fang L."/>
            <person name="Zhang Z."/>
            <person name="Zhang Y."/>
            <person name="Huang X."/>
            <person name="Su Z."/>
            <person name="Tong W."/>
            <person name="Li J."/>
            <person name="Tong Z."/>
            <person name="Li S."/>
            <person name="Ye J."/>
            <person name="Wang L."/>
            <person name="Fang L."/>
            <person name="Lei T."/>
            <person name="Chen C.-S."/>
            <person name="Chen H.-C."/>
            <person name="Xu Z."/>
            <person name="Li H."/>
            <person name="Huang H."/>
            <person name="Zhang F."/>
            <person name="Xu H."/>
            <person name="Li N."/>
            <person name="Zhao C."/>
            <person name="Li S."/>
            <person name="Dong L."/>
            <person name="Huang Y."/>
            <person name="Li L."/>
            <person name="Xi Y."/>
            <person name="Qi Q."/>
            <person name="Li W."/>
            <person name="Zhang B."/>
            <person name="Hu W."/>
            <person name="Zhang Y."/>
            <person name="Tian X."/>
            <person name="Jiao Y."/>
            <person name="Liang X."/>
            <person name="Jin J."/>
            <person name="Gao L."/>
            <person name="Zheng W."/>
            <person name="Hao B."/>
            <person name="Liu S.-M."/>
            <person name="Wang W."/>
            <person name="Yuan L."/>
            <person name="Cao M."/>
            <person name="McDermott J."/>
            <person name="Samudrala R."/>
            <person name="Wang J."/>
            <person name="Wong G.K.-S."/>
            <person name="Yang H."/>
        </authorList>
    </citation>
    <scope>NUCLEOTIDE SEQUENCE [LARGE SCALE GENOMIC DNA]</scope>
    <source>
        <strain>cv. 93-11</strain>
    </source>
</reference>
<name>PLA7_ORYSI</name>
<gene>
    <name type="ORF">OsI_21081</name>
</gene>
<protein>
    <recommendedName>
        <fullName>Phospholipase A1-II 7</fullName>
        <ecNumber>3.1.1.-</ecNumber>
    </recommendedName>
</protein>
<comment type="function">
    <text evidence="1">Acylhydrolase that catalyzes the hydrolysis of phospholipids at the sn-1 position.</text>
</comment>
<comment type="subcellular location">
    <subcellularLocation>
        <location evidence="1">Cytoplasm</location>
    </subcellularLocation>
</comment>
<comment type="similarity">
    <text evidence="3">Belongs to the AB hydrolase superfamily. Lipase family.</text>
</comment>